<feature type="signal peptide" evidence="1">
    <location>
        <begin position="1"/>
        <end position="20"/>
    </location>
</feature>
<feature type="chain" id="PRO_0000018753" description="Beta-2-microglobulin">
    <location>
        <begin position="21"/>
        <end position="119"/>
    </location>
</feature>
<feature type="domain" description="Ig-like C1-type">
    <location>
        <begin position="25"/>
        <end position="114"/>
    </location>
</feature>
<feature type="disulfide bond" evidence="2">
    <location>
        <begin position="45"/>
        <end position="100"/>
    </location>
</feature>
<organism>
    <name type="scientific">Aotus lemurinus</name>
    <name type="common">Gray-bellied night monkey</name>
    <dbReference type="NCBI Taxonomy" id="43147"/>
    <lineage>
        <taxon>Eukaryota</taxon>
        <taxon>Metazoa</taxon>
        <taxon>Chordata</taxon>
        <taxon>Craniata</taxon>
        <taxon>Vertebrata</taxon>
        <taxon>Euteleostomi</taxon>
        <taxon>Mammalia</taxon>
        <taxon>Eutheria</taxon>
        <taxon>Euarchontoglires</taxon>
        <taxon>Primates</taxon>
        <taxon>Haplorrhini</taxon>
        <taxon>Platyrrhini</taxon>
        <taxon>Aotidae</taxon>
        <taxon>Aotus</taxon>
    </lineage>
</organism>
<reference key="1">
    <citation type="journal article" date="1998" name="Immunogenetics">
        <title>Beta-2-microglobulin in neotropical primates (Platyrrhini).</title>
        <authorList>
            <person name="Canavez F.C."/>
            <person name="Ladasky J.J."/>
            <person name="Muniz J.A.P.C."/>
            <person name="Seuanez H.N."/>
            <person name="Parham P."/>
        </authorList>
    </citation>
    <scope>NUCLEOTIDE SEQUENCE [GENOMIC DNA]</scope>
    <source>
        <tissue>Blood</tissue>
    </source>
</reference>
<protein>
    <recommendedName>
        <fullName>Beta-2-microglobulin</fullName>
    </recommendedName>
</protein>
<sequence length="119" mass="13693">MARFVVVALLVLLSLSGLEAIQHAPKIQVYSRHPAENGKPNFLNCYVSGFHPSDIEVDLLKNGKKIEKVEHSDLSFSKDWSFYLLYYTEFTPNEKDEYACRVSHVTLSTPKTVKWDRNM</sequence>
<evidence type="ECO:0000250" key="1"/>
<evidence type="ECO:0000255" key="2">
    <source>
        <dbReference type="PROSITE-ProRule" id="PRU00114"/>
    </source>
</evidence>
<evidence type="ECO:0000305" key="3"/>
<gene>
    <name type="primary">B2M</name>
</gene>
<keyword id="KW-1015">Disulfide bond</keyword>
<keyword id="KW-0391">Immunity</keyword>
<keyword id="KW-0393">Immunoglobulin domain</keyword>
<keyword id="KW-0490">MHC I</keyword>
<keyword id="KW-0964">Secreted</keyword>
<keyword id="KW-0732">Signal</keyword>
<accession>P63063</accession>
<accession>O46570</accession>
<comment type="function">
    <text evidence="1">Component of the class I major histocompatibility complex (MHC). Involved in the presentation of peptide antigens to the immune system (By similarity).</text>
</comment>
<comment type="subunit">
    <text evidence="1">Heterodimer of an alpha chain and a beta chain. Beta-2-microglobulin is the beta-chain of major histocompatibility complex class I molecules (By similarity).</text>
</comment>
<comment type="subcellular location">
    <subcellularLocation>
        <location evidence="1">Secreted</location>
    </subcellularLocation>
</comment>
<comment type="similarity">
    <text evidence="3">Belongs to the beta-2-microglobulin family.</text>
</comment>
<proteinExistence type="inferred from homology"/>
<name>B2MG_AOTLE</name>
<dbReference type="EMBL" id="AF032091">
    <property type="protein sequence ID" value="AAC39797.1"/>
    <property type="molecule type" value="Genomic_DNA"/>
</dbReference>
<dbReference type="EMBL" id="AF032089">
    <property type="protein sequence ID" value="AAC39797.1"/>
    <property type="status" value="JOINED"/>
    <property type="molecule type" value="Genomic_DNA"/>
</dbReference>
<dbReference type="EMBL" id="AF032090">
    <property type="protein sequence ID" value="AAC39797.1"/>
    <property type="status" value="JOINED"/>
    <property type="molecule type" value="Genomic_DNA"/>
</dbReference>
<dbReference type="SMR" id="P63063"/>
<dbReference type="GO" id="GO:0005576">
    <property type="term" value="C:extracellular region"/>
    <property type="evidence" value="ECO:0007669"/>
    <property type="project" value="UniProtKB-SubCell"/>
</dbReference>
<dbReference type="GO" id="GO:0042612">
    <property type="term" value="C:MHC class I protein complex"/>
    <property type="evidence" value="ECO:0007669"/>
    <property type="project" value="UniProtKB-KW"/>
</dbReference>
<dbReference type="GO" id="GO:0002474">
    <property type="term" value="P:antigen processing and presentation of peptide antigen via MHC class I"/>
    <property type="evidence" value="ECO:0007669"/>
    <property type="project" value="UniProtKB-KW"/>
</dbReference>
<dbReference type="GO" id="GO:0006955">
    <property type="term" value="P:immune response"/>
    <property type="evidence" value="ECO:0007669"/>
    <property type="project" value="InterPro"/>
</dbReference>
<dbReference type="CDD" id="cd05770">
    <property type="entry name" value="IgC1_beta2m"/>
    <property type="match status" value="1"/>
</dbReference>
<dbReference type="FunFam" id="2.60.40.10:FF:001005">
    <property type="entry name" value="Beta-2-microglobulin"/>
    <property type="match status" value="1"/>
</dbReference>
<dbReference type="Gene3D" id="2.60.40.10">
    <property type="entry name" value="Immunoglobulins"/>
    <property type="match status" value="1"/>
</dbReference>
<dbReference type="InterPro" id="IPR015707">
    <property type="entry name" value="B2Microglobulin"/>
</dbReference>
<dbReference type="InterPro" id="IPR007110">
    <property type="entry name" value="Ig-like_dom"/>
</dbReference>
<dbReference type="InterPro" id="IPR036179">
    <property type="entry name" value="Ig-like_dom_sf"/>
</dbReference>
<dbReference type="InterPro" id="IPR013783">
    <property type="entry name" value="Ig-like_fold"/>
</dbReference>
<dbReference type="InterPro" id="IPR003006">
    <property type="entry name" value="Ig/MHC_CS"/>
</dbReference>
<dbReference type="InterPro" id="IPR003597">
    <property type="entry name" value="Ig_C1-set"/>
</dbReference>
<dbReference type="InterPro" id="IPR050160">
    <property type="entry name" value="MHC/Immunoglobulin"/>
</dbReference>
<dbReference type="PANTHER" id="PTHR19944:SF62">
    <property type="entry name" value="BETA-2-MICROGLOBULIN"/>
    <property type="match status" value="1"/>
</dbReference>
<dbReference type="PANTHER" id="PTHR19944">
    <property type="entry name" value="MHC CLASS II-RELATED"/>
    <property type="match status" value="1"/>
</dbReference>
<dbReference type="Pfam" id="PF07654">
    <property type="entry name" value="C1-set"/>
    <property type="match status" value="1"/>
</dbReference>
<dbReference type="SMART" id="SM00407">
    <property type="entry name" value="IGc1"/>
    <property type="match status" value="1"/>
</dbReference>
<dbReference type="SUPFAM" id="SSF48726">
    <property type="entry name" value="Immunoglobulin"/>
    <property type="match status" value="1"/>
</dbReference>
<dbReference type="PROSITE" id="PS50835">
    <property type="entry name" value="IG_LIKE"/>
    <property type="match status" value="1"/>
</dbReference>
<dbReference type="PROSITE" id="PS00290">
    <property type="entry name" value="IG_MHC"/>
    <property type="match status" value="1"/>
</dbReference>